<reference key="1">
    <citation type="journal article" date="2003" name="Nature">
        <title>The genome sequence of Bacillus anthracis Ames and comparison to closely related bacteria.</title>
        <authorList>
            <person name="Read T.D."/>
            <person name="Peterson S.N."/>
            <person name="Tourasse N.J."/>
            <person name="Baillie L.W."/>
            <person name="Paulsen I.T."/>
            <person name="Nelson K.E."/>
            <person name="Tettelin H."/>
            <person name="Fouts D.E."/>
            <person name="Eisen J.A."/>
            <person name="Gill S.R."/>
            <person name="Holtzapple E.K."/>
            <person name="Okstad O.A."/>
            <person name="Helgason E."/>
            <person name="Rilstone J."/>
            <person name="Wu M."/>
            <person name="Kolonay J.F."/>
            <person name="Beanan M.J."/>
            <person name="Dodson R.J."/>
            <person name="Brinkac L.M."/>
            <person name="Gwinn M.L."/>
            <person name="DeBoy R.T."/>
            <person name="Madpu R."/>
            <person name="Daugherty S.C."/>
            <person name="Durkin A.S."/>
            <person name="Haft D.H."/>
            <person name="Nelson W.C."/>
            <person name="Peterson J.D."/>
            <person name="Pop M."/>
            <person name="Khouri H.M."/>
            <person name="Radune D."/>
            <person name="Benton J.L."/>
            <person name="Mahamoud Y."/>
            <person name="Jiang L."/>
            <person name="Hance I.R."/>
            <person name="Weidman J.F."/>
            <person name="Berry K.J."/>
            <person name="Plaut R.D."/>
            <person name="Wolf A.M."/>
            <person name="Watkins K.L."/>
            <person name="Nierman W.C."/>
            <person name="Hazen A."/>
            <person name="Cline R.T."/>
            <person name="Redmond C."/>
            <person name="Thwaite J.E."/>
            <person name="White O."/>
            <person name="Salzberg S.L."/>
            <person name="Thomason B."/>
            <person name="Friedlander A.M."/>
            <person name="Koehler T.M."/>
            <person name="Hanna P.C."/>
            <person name="Kolstoe A.-B."/>
            <person name="Fraser C.M."/>
        </authorList>
    </citation>
    <scope>NUCLEOTIDE SEQUENCE [LARGE SCALE GENOMIC DNA]</scope>
    <source>
        <strain>Ames / isolate Porton</strain>
    </source>
</reference>
<reference key="2">
    <citation type="journal article" date="2009" name="J. Bacteriol.">
        <title>The complete genome sequence of Bacillus anthracis Ames 'Ancestor'.</title>
        <authorList>
            <person name="Ravel J."/>
            <person name="Jiang L."/>
            <person name="Stanley S.T."/>
            <person name="Wilson M.R."/>
            <person name="Decker R.S."/>
            <person name="Read T.D."/>
            <person name="Worsham P."/>
            <person name="Keim P.S."/>
            <person name="Salzberg S.L."/>
            <person name="Fraser-Liggett C.M."/>
            <person name="Rasko D.A."/>
        </authorList>
    </citation>
    <scope>NUCLEOTIDE SEQUENCE [LARGE SCALE GENOMIC DNA]</scope>
    <source>
        <strain>Ames ancestor</strain>
    </source>
</reference>
<reference key="3">
    <citation type="submission" date="2004-01" db="EMBL/GenBank/DDBJ databases">
        <title>Complete genome sequence of Bacillus anthracis Sterne.</title>
        <authorList>
            <person name="Brettin T.S."/>
            <person name="Bruce D."/>
            <person name="Challacombe J.F."/>
            <person name="Gilna P."/>
            <person name="Han C."/>
            <person name="Hill K."/>
            <person name="Hitchcock P."/>
            <person name="Jackson P."/>
            <person name="Keim P."/>
            <person name="Longmire J."/>
            <person name="Lucas S."/>
            <person name="Okinaka R."/>
            <person name="Richardson P."/>
            <person name="Rubin E."/>
            <person name="Tice H."/>
        </authorList>
    </citation>
    <scope>NUCLEOTIDE SEQUENCE [LARGE SCALE GENOMIC DNA]</scope>
    <source>
        <strain>Sterne</strain>
    </source>
</reference>
<proteinExistence type="inferred from homology"/>
<feature type="chain" id="PRO_0000047857" description="DNA-directed RNA polymerase subunit beta">
    <location>
        <begin position="1"/>
        <end position="1177"/>
    </location>
</feature>
<feature type="region of interest" description="Disordered" evidence="2">
    <location>
        <begin position="1147"/>
        <end position="1177"/>
    </location>
</feature>
<feature type="compositionally biased region" description="Acidic residues" evidence="2">
    <location>
        <begin position="1147"/>
        <end position="1161"/>
    </location>
</feature>
<feature type="compositionally biased region" description="Basic and acidic residues" evidence="2">
    <location>
        <begin position="1162"/>
        <end position="1177"/>
    </location>
</feature>
<protein>
    <recommendedName>
        <fullName evidence="1">DNA-directed RNA polymerase subunit beta</fullName>
        <shortName evidence="1">RNAP subunit beta</shortName>
        <ecNumber evidence="1">2.7.7.6</ecNumber>
    </recommendedName>
    <alternativeName>
        <fullName evidence="1">RNA polymerase subunit beta</fullName>
    </alternativeName>
    <alternativeName>
        <fullName evidence="1">Transcriptase subunit beta</fullName>
    </alternativeName>
</protein>
<evidence type="ECO:0000255" key="1">
    <source>
        <dbReference type="HAMAP-Rule" id="MF_01321"/>
    </source>
</evidence>
<evidence type="ECO:0000256" key="2">
    <source>
        <dbReference type="SAM" id="MobiDB-lite"/>
    </source>
</evidence>
<keyword id="KW-0240">DNA-directed RNA polymerase</keyword>
<keyword id="KW-0548">Nucleotidyltransferase</keyword>
<keyword id="KW-1185">Reference proteome</keyword>
<keyword id="KW-0804">Transcription</keyword>
<keyword id="KW-0808">Transferase</keyword>
<comment type="function">
    <text evidence="1">DNA-dependent RNA polymerase catalyzes the transcription of DNA into RNA using the four ribonucleoside triphosphates as substrates.</text>
</comment>
<comment type="catalytic activity">
    <reaction evidence="1">
        <text>RNA(n) + a ribonucleoside 5'-triphosphate = RNA(n+1) + diphosphate</text>
        <dbReference type="Rhea" id="RHEA:21248"/>
        <dbReference type="Rhea" id="RHEA-COMP:14527"/>
        <dbReference type="Rhea" id="RHEA-COMP:17342"/>
        <dbReference type="ChEBI" id="CHEBI:33019"/>
        <dbReference type="ChEBI" id="CHEBI:61557"/>
        <dbReference type="ChEBI" id="CHEBI:140395"/>
        <dbReference type="EC" id="2.7.7.6"/>
    </reaction>
</comment>
<comment type="subunit">
    <text evidence="1">The RNAP catalytic core consists of 2 alpha, 1 beta, 1 beta' and 1 omega subunit. When a sigma factor is associated with the core the holoenzyme is formed, which can initiate transcription.</text>
</comment>
<comment type="similarity">
    <text evidence="1">Belongs to the RNA polymerase beta chain family.</text>
</comment>
<dbReference type="EC" id="2.7.7.6" evidence="1"/>
<dbReference type="EMBL" id="AE016879">
    <property type="protein sequence ID" value="AAP24156.1"/>
    <property type="molecule type" value="Genomic_DNA"/>
</dbReference>
<dbReference type="EMBL" id="AE017334">
    <property type="protein sequence ID" value="AAT70113.1"/>
    <property type="molecule type" value="Genomic_DNA"/>
</dbReference>
<dbReference type="EMBL" id="AE017225">
    <property type="protein sequence ID" value="AAT52439.1"/>
    <property type="molecule type" value="Genomic_DNA"/>
</dbReference>
<dbReference type="RefSeq" id="NP_842670.1">
    <property type="nucleotide sequence ID" value="NC_003997.3"/>
</dbReference>
<dbReference type="RefSeq" id="WP_000147548.1">
    <property type="nucleotide sequence ID" value="NZ_WXXJ01000051.1"/>
</dbReference>
<dbReference type="RefSeq" id="YP_026388.1">
    <property type="nucleotide sequence ID" value="NC_005945.1"/>
</dbReference>
<dbReference type="SMR" id="Q81VT8"/>
<dbReference type="IntAct" id="Q81VT8">
    <property type="interactions" value="46"/>
</dbReference>
<dbReference type="STRING" id="261594.GBAA_0102"/>
<dbReference type="DNASU" id="1086075"/>
<dbReference type="GeneID" id="45020147"/>
<dbReference type="KEGG" id="ban:BA_0102"/>
<dbReference type="KEGG" id="banh:HYU01_00565"/>
<dbReference type="KEGG" id="bar:GBAA_0102"/>
<dbReference type="KEGG" id="bat:BAS0102"/>
<dbReference type="PATRIC" id="fig|198094.11.peg.99"/>
<dbReference type="eggNOG" id="COG0085">
    <property type="taxonomic scope" value="Bacteria"/>
</dbReference>
<dbReference type="HOGENOM" id="CLU_000524_4_1_9"/>
<dbReference type="OMA" id="FMTWEGY"/>
<dbReference type="OrthoDB" id="9803954at2"/>
<dbReference type="Proteomes" id="UP000000427">
    <property type="component" value="Chromosome"/>
</dbReference>
<dbReference type="Proteomes" id="UP000000594">
    <property type="component" value="Chromosome"/>
</dbReference>
<dbReference type="GO" id="GO:0000428">
    <property type="term" value="C:DNA-directed RNA polymerase complex"/>
    <property type="evidence" value="ECO:0007669"/>
    <property type="project" value="UniProtKB-KW"/>
</dbReference>
<dbReference type="GO" id="GO:0003677">
    <property type="term" value="F:DNA binding"/>
    <property type="evidence" value="ECO:0007669"/>
    <property type="project" value="UniProtKB-UniRule"/>
</dbReference>
<dbReference type="GO" id="GO:0003899">
    <property type="term" value="F:DNA-directed RNA polymerase activity"/>
    <property type="evidence" value="ECO:0007669"/>
    <property type="project" value="UniProtKB-UniRule"/>
</dbReference>
<dbReference type="GO" id="GO:0032549">
    <property type="term" value="F:ribonucleoside binding"/>
    <property type="evidence" value="ECO:0007669"/>
    <property type="project" value="InterPro"/>
</dbReference>
<dbReference type="GO" id="GO:0006351">
    <property type="term" value="P:DNA-templated transcription"/>
    <property type="evidence" value="ECO:0007669"/>
    <property type="project" value="UniProtKB-UniRule"/>
</dbReference>
<dbReference type="CDD" id="cd00653">
    <property type="entry name" value="RNA_pol_B_RPB2"/>
    <property type="match status" value="1"/>
</dbReference>
<dbReference type="FunFam" id="3.90.1800.10:FF:000001">
    <property type="entry name" value="DNA-directed RNA polymerase subunit beta"/>
    <property type="match status" value="1"/>
</dbReference>
<dbReference type="Gene3D" id="2.40.50.100">
    <property type="match status" value="1"/>
</dbReference>
<dbReference type="Gene3D" id="2.40.50.150">
    <property type="match status" value="1"/>
</dbReference>
<dbReference type="Gene3D" id="3.90.1100.10">
    <property type="match status" value="2"/>
</dbReference>
<dbReference type="Gene3D" id="2.30.150.10">
    <property type="entry name" value="DNA-directed RNA polymerase, beta subunit, external 1 domain"/>
    <property type="match status" value="1"/>
</dbReference>
<dbReference type="Gene3D" id="2.40.270.10">
    <property type="entry name" value="DNA-directed RNA polymerase, subunit 2, domain 6"/>
    <property type="match status" value="1"/>
</dbReference>
<dbReference type="Gene3D" id="3.90.1800.10">
    <property type="entry name" value="RNA polymerase alpha subunit dimerisation domain"/>
    <property type="match status" value="1"/>
</dbReference>
<dbReference type="Gene3D" id="3.90.1110.10">
    <property type="entry name" value="RNA polymerase Rpb2, domain 2"/>
    <property type="match status" value="1"/>
</dbReference>
<dbReference type="HAMAP" id="MF_01321">
    <property type="entry name" value="RNApol_bact_RpoB"/>
    <property type="match status" value="1"/>
</dbReference>
<dbReference type="InterPro" id="IPR042107">
    <property type="entry name" value="DNA-dir_RNA_pol_bsu_ext_1_sf"/>
</dbReference>
<dbReference type="InterPro" id="IPR019462">
    <property type="entry name" value="DNA-dir_RNA_pol_bsu_external_1"/>
</dbReference>
<dbReference type="InterPro" id="IPR015712">
    <property type="entry name" value="DNA-dir_RNA_pol_su2"/>
</dbReference>
<dbReference type="InterPro" id="IPR007120">
    <property type="entry name" value="DNA-dir_RNAP_su2_dom"/>
</dbReference>
<dbReference type="InterPro" id="IPR037033">
    <property type="entry name" value="DNA-dir_RNAP_su2_hyb_sf"/>
</dbReference>
<dbReference type="InterPro" id="IPR010243">
    <property type="entry name" value="RNA_pol_bsu_bac"/>
</dbReference>
<dbReference type="InterPro" id="IPR007121">
    <property type="entry name" value="RNA_pol_bsu_CS"/>
</dbReference>
<dbReference type="InterPro" id="IPR007644">
    <property type="entry name" value="RNA_pol_bsu_protrusion"/>
</dbReference>
<dbReference type="InterPro" id="IPR007642">
    <property type="entry name" value="RNA_pol_Rpb2_2"/>
</dbReference>
<dbReference type="InterPro" id="IPR037034">
    <property type="entry name" value="RNA_pol_Rpb2_2_sf"/>
</dbReference>
<dbReference type="InterPro" id="IPR007645">
    <property type="entry name" value="RNA_pol_Rpb2_3"/>
</dbReference>
<dbReference type="InterPro" id="IPR007641">
    <property type="entry name" value="RNA_pol_Rpb2_7"/>
</dbReference>
<dbReference type="InterPro" id="IPR014724">
    <property type="entry name" value="RNA_pol_RPB2_OB-fold"/>
</dbReference>
<dbReference type="NCBIfam" id="NF001616">
    <property type="entry name" value="PRK00405.1"/>
    <property type="match status" value="1"/>
</dbReference>
<dbReference type="NCBIfam" id="TIGR02013">
    <property type="entry name" value="rpoB"/>
    <property type="match status" value="1"/>
</dbReference>
<dbReference type="PANTHER" id="PTHR20856">
    <property type="entry name" value="DNA-DIRECTED RNA POLYMERASE I SUBUNIT 2"/>
    <property type="match status" value="1"/>
</dbReference>
<dbReference type="Pfam" id="PF04563">
    <property type="entry name" value="RNA_pol_Rpb2_1"/>
    <property type="match status" value="1"/>
</dbReference>
<dbReference type="Pfam" id="PF04561">
    <property type="entry name" value="RNA_pol_Rpb2_2"/>
    <property type="match status" value="2"/>
</dbReference>
<dbReference type="Pfam" id="PF04565">
    <property type="entry name" value="RNA_pol_Rpb2_3"/>
    <property type="match status" value="1"/>
</dbReference>
<dbReference type="Pfam" id="PF10385">
    <property type="entry name" value="RNA_pol_Rpb2_45"/>
    <property type="match status" value="1"/>
</dbReference>
<dbReference type="Pfam" id="PF00562">
    <property type="entry name" value="RNA_pol_Rpb2_6"/>
    <property type="match status" value="1"/>
</dbReference>
<dbReference type="Pfam" id="PF04560">
    <property type="entry name" value="RNA_pol_Rpb2_7"/>
    <property type="match status" value="1"/>
</dbReference>
<dbReference type="SUPFAM" id="SSF64484">
    <property type="entry name" value="beta and beta-prime subunits of DNA dependent RNA-polymerase"/>
    <property type="match status" value="1"/>
</dbReference>
<dbReference type="PROSITE" id="PS01166">
    <property type="entry name" value="RNA_POL_BETA"/>
    <property type="match status" value="1"/>
</dbReference>
<sequence length="1177" mass="131891">MTGQLVQYGRHRQRRSYARISEVLELPNLIEIQTSSYQWFLDEGLREMFQDISPIEDFTGNLSLEFIDYSLGEPKYSVDECKERDVTYAAPLRVKVRLINKETGEVKEQDVFMGDFPLMTETGTFVINGAERVIVSQLVRSPSVYYSGKVDKNGKRGFTATVIPNRGAWLEYETDAKDVVYVRIDRTRKLPVTVLLRALGFGSDQEITELLGDNEYLSNTLEKDNTDSTEKALLEIYERLRPGEPPTVENAKSLLVSRFFDPKRYDLANVGRYKINKKLHIKNRLFNQRLAETLVDPETGEILAAEGTILDRRTLDRILPYLEKNIGFKTAKPMGGVVEGDVELQSIKIYAPESEGERVINVIGNANITRDVKHITPGDILASISYFFNLLYKVGDTDDIDHLGNRRLRSVGELLQNQFRIGLSRMERVVRERMSIQDTNAITPQALINIRPVIAAIKEFFGSSQLSQFMDQTNPLAELTHKRRLSALGPGGLTRERAGFEVRDVHYSHYGRMCPIETPEGPNIGLINSLSSFAKVNEFGFIETPYRRVDPETGLVTGHVDYLTADEEDNYVVAQANMKLSEEGEFLDEDIVARFRGENIVTNKERIDYMDVSPKQVVSAATACIPFLENDDSNRALMGANMQRQAVPLMNPESPIVGTGMEYVSAKDSGAAVICKHPGIVERVEAREVWVRRYVEVDGQTVKGDLDRYKMQKFIRSNQGTCYNQRPIVSVGNEVVKGEILADGPSMELGELALGRNVLVGFMTWDGYNYEDAIIMSERLVKDDVYTSIHIEEYESEARDTKLGPEEITRDIPNVGEDALRNLDERGIIRVGAEVKDGDLLVGKVTPKGVTELTAEERLLHAIFGEKAREVRDTSLRVPHGGGGIILDVKVFNREDGDELPPGVNQLVRAYIVQKRKISEGDKMAGRHGNKGVISRILPEEDMPYLPDGTPIDIMLNPLGVPSRMNIGQVLELHLGMAARYLGIHIATPVFDGAREEDVWGTIEEAGMANDAKTILYDGRTGEPFDNRVSVGVMYMIKLAHMVDDKLHARSTGPYSLVTQQPLGGKAQFGGQRFGEMEVWALEAYGAAYTLQEILTVKSDDVIGRVKTYEAIVKGENVPEPGVPESFKVLIKELQSLGMDVKMMSSDDTEIEMRDTEDDDDHQSADKLNVEVETTKE</sequence>
<organism>
    <name type="scientific">Bacillus anthracis</name>
    <dbReference type="NCBI Taxonomy" id="1392"/>
    <lineage>
        <taxon>Bacteria</taxon>
        <taxon>Bacillati</taxon>
        <taxon>Bacillota</taxon>
        <taxon>Bacilli</taxon>
        <taxon>Bacillales</taxon>
        <taxon>Bacillaceae</taxon>
        <taxon>Bacillus</taxon>
        <taxon>Bacillus cereus group</taxon>
    </lineage>
</organism>
<name>RPOB_BACAN</name>
<accession>Q81VT8</accession>
<accession>Q6I4U2</accession>
<gene>
    <name evidence="1" type="primary">rpoB</name>
    <name type="ordered locus">BA_0102</name>
    <name type="ordered locus">GBAA_0102</name>
    <name type="ordered locus">BAS0102</name>
</gene>